<accession>Q3K5Z7</accession>
<reference key="1">
    <citation type="journal article" date="2009" name="Genome Biol.">
        <title>Genomic and genetic analyses of diversity and plant interactions of Pseudomonas fluorescens.</title>
        <authorList>
            <person name="Silby M.W."/>
            <person name="Cerdeno-Tarraga A.M."/>
            <person name="Vernikos G.S."/>
            <person name="Giddens S.R."/>
            <person name="Jackson R.W."/>
            <person name="Preston G.M."/>
            <person name="Zhang X.-X."/>
            <person name="Moon C.D."/>
            <person name="Gehrig S.M."/>
            <person name="Godfrey S.A.C."/>
            <person name="Knight C.G."/>
            <person name="Malone J.G."/>
            <person name="Robinson Z."/>
            <person name="Spiers A.J."/>
            <person name="Harris S."/>
            <person name="Challis G.L."/>
            <person name="Yaxley A.M."/>
            <person name="Harris D."/>
            <person name="Seeger K."/>
            <person name="Murphy L."/>
            <person name="Rutter S."/>
            <person name="Squares R."/>
            <person name="Quail M.A."/>
            <person name="Saunders E."/>
            <person name="Mavromatis K."/>
            <person name="Brettin T.S."/>
            <person name="Bentley S.D."/>
            <person name="Hothersall J."/>
            <person name="Stephens E."/>
            <person name="Thomas C.M."/>
            <person name="Parkhill J."/>
            <person name="Levy S.B."/>
            <person name="Rainey P.B."/>
            <person name="Thomson N.R."/>
        </authorList>
    </citation>
    <scope>NUCLEOTIDE SEQUENCE [LARGE SCALE GENOMIC DNA]</scope>
    <source>
        <strain>Pf0-1</strain>
    </source>
</reference>
<gene>
    <name evidence="1" type="primary">rpsQ</name>
    <name type="ordered locus">Pfl01_5070</name>
</gene>
<comment type="function">
    <text evidence="1">One of the primary rRNA binding proteins, it binds specifically to the 5'-end of 16S ribosomal RNA.</text>
</comment>
<comment type="subunit">
    <text evidence="1">Part of the 30S ribosomal subunit.</text>
</comment>
<comment type="similarity">
    <text evidence="1">Belongs to the universal ribosomal protein uS17 family.</text>
</comment>
<sequence>MAEAEKTVRTLTGRVVSDKMDKTITVLIERRVKHPIYGKYVKRSTKLHAHDETNQCHIGDKVTIRETRPMAKTKSWALVDVLERAVEV</sequence>
<organism>
    <name type="scientific">Pseudomonas fluorescens (strain Pf0-1)</name>
    <dbReference type="NCBI Taxonomy" id="205922"/>
    <lineage>
        <taxon>Bacteria</taxon>
        <taxon>Pseudomonadati</taxon>
        <taxon>Pseudomonadota</taxon>
        <taxon>Gammaproteobacteria</taxon>
        <taxon>Pseudomonadales</taxon>
        <taxon>Pseudomonadaceae</taxon>
        <taxon>Pseudomonas</taxon>
    </lineage>
</organism>
<protein>
    <recommendedName>
        <fullName evidence="1">Small ribosomal subunit protein uS17</fullName>
    </recommendedName>
    <alternativeName>
        <fullName evidence="2">30S ribosomal protein S17</fullName>
    </alternativeName>
</protein>
<feature type="chain" id="PRO_0000233544" description="Small ribosomal subunit protein uS17">
    <location>
        <begin position="1"/>
        <end position="88"/>
    </location>
</feature>
<proteinExistence type="inferred from homology"/>
<name>RS17_PSEPF</name>
<keyword id="KW-0687">Ribonucleoprotein</keyword>
<keyword id="KW-0689">Ribosomal protein</keyword>
<keyword id="KW-0694">RNA-binding</keyword>
<keyword id="KW-0699">rRNA-binding</keyword>
<evidence type="ECO:0000255" key="1">
    <source>
        <dbReference type="HAMAP-Rule" id="MF_01345"/>
    </source>
</evidence>
<evidence type="ECO:0000305" key="2"/>
<dbReference type="EMBL" id="CP000094">
    <property type="protein sequence ID" value="ABA76807.1"/>
    <property type="molecule type" value="Genomic_DNA"/>
</dbReference>
<dbReference type="RefSeq" id="WP_003194644.1">
    <property type="nucleotide sequence ID" value="NC_007492.2"/>
</dbReference>
<dbReference type="SMR" id="Q3K5Z7"/>
<dbReference type="GeneID" id="96618859"/>
<dbReference type="KEGG" id="pfo:Pfl01_5070"/>
<dbReference type="eggNOG" id="COG0186">
    <property type="taxonomic scope" value="Bacteria"/>
</dbReference>
<dbReference type="HOGENOM" id="CLU_073626_1_1_6"/>
<dbReference type="Proteomes" id="UP000002704">
    <property type="component" value="Chromosome"/>
</dbReference>
<dbReference type="GO" id="GO:0022627">
    <property type="term" value="C:cytosolic small ribosomal subunit"/>
    <property type="evidence" value="ECO:0007669"/>
    <property type="project" value="TreeGrafter"/>
</dbReference>
<dbReference type="GO" id="GO:0019843">
    <property type="term" value="F:rRNA binding"/>
    <property type="evidence" value="ECO:0007669"/>
    <property type="project" value="UniProtKB-UniRule"/>
</dbReference>
<dbReference type="GO" id="GO:0003735">
    <property type="term" value="F:structural constituent of ribosome"/>
    <property type="evidence" value="ECO:0007669"/>
    <property type="project" value="InterPro"/>
</dbReference>
<dbReference type="GO" id="GO:0006412">
    <property type="term" value="P:translation"/>
    <property type="evidence" value="ECO:0007669"/>
    <property type="project" value="UniProtKB-UniRule"/>
</dbReference>
<dbReference type="CDD" id="cd00364">
    <property type="entry name" value="Ribosomal_uS17"/>
    <property type="match status" value="1"/>
</dbReference>
<dbReference type="FunFam" id="2.40.50.140:FF:000014">
    <property type="entry name" value="30S ribosomal protein S17"/>
    <property type="match status" value="1"/>
</dbReference>
<dbReference type="Gene3D" id="2.40.50.140">
    <property type="entry name" value="Nucleic acid-binding proteins"/>
    <property type="match status" value="1"/>
</dbReference>
<dbReference type="HAMAP" id="MF_01345_B">
    <property type="entry name" value="Ribosomal_uS17_B"/>
    <property type="match status" value="1"/>
</dbReference>
<dbReference type="InterPro" id="IPR012340">
    <property type="entry name" value="NA-bd_OB-fold"/>
</dbReference>
<dbReference type="InterPro" id="IPR000266">
    <property type="entry name" value="Ribosomal_uS17"/>
</dbReference>
<dbReference type="InterPro" id="IPR019984">
    <property type="entry name" value="Ribosomal_uS17_bact/chlr"/>
</dbReference>
<dbReference type="NCBIfam" id="NF004123">
    <property type="entry name" value="PRK05610.1"/>
    <property type="match status" value="1"/>
</dbReference>
<dbReference type="NCBIfam" id="TIGR03635">
    <property type="entry name" value="uS17_bact"/>
    <property type="match status" value="1"/>
</dbReference>
<dbReference type="PANTHER" id="PTHR10744">
    <property type="entry name" value="40S RIBOSOMAL PROTEIN S11 FAMILY MEMBER"/>
    <property type="match status" value="1"/>
</dbReference>
<dbReference type="PANTHER" id="PTHR10744:SF1">
    <property type="entry name" value="SMALL RIBOSOMAL SUBUNIT PROTEIN US17M"/>
    <property type="match status" value="1"/>
</dbReference>
<dbReference type="Pfam" id="PF00366">
    <property type="entry name" value="Ribosomal_S17"/>
    <property type="match status" value="1"/>
</dbReference>
<dbReference type="PRINTS" id="PR00973">
    <property type="entry name" value="RIBOSOMALS17"/>
</dbReference>
<dbReference type="SUPFAM" id="SSF50249">
    <property type="entry name" value="Nucleic acid-binding proteins"/>
    <property type="match status" value="1"/>
</dbReference>